<organism>
    <name type="scientific">Bacillus subtilis (strain 168)</name>
    <dbReference type="NCBI Taxonomy" id="224308"/>
    <lineage>
        <taxon>Bacteria</taxon>
        <taxon>Bacillati</taxon>
        <taxon>Bacillota</taxon>
        <taxon>Bacilli</taxon>
        <taxon>Bacillales</taxon>
        <taxon>Bacillaceae</taxon>
        <taxon>Bacillus</taxon>
    </lineage>
</organism>
<feature type="chain" id="PRO_0000147295" description="GTP cyclohydrolase 1 type 2 homolog">
    <location>
        <begin position="1"/>
        <end position="373"/>
    </location>
</feature>
<feature type="binding site" evidence="1">
    <location>
        <position position="68"/>
    </location>
    <ligand>
        <name>a divalent metal cation</name>
        <dbReference type="ChEBI" id="CHEBI:60240"/>
        <label>1</label>
    </ligand>
</feature>
<feature type="binding site" evidence="1">
    <location>
        <position position="69"/>
    </location>
    <ligand>
        <name>a divalent metal cation</name>
        <dbReference type="ChEBI" id="CHEBI:60240"/>
        <label>2</label>
    </ligand>
</feature>
<feature type="binding site" evidence="1">
    <location>
        <position position="107"/>
    </location>
    <ligand>
        <name>a divalent metal cation</name>
        <dbReference type="ChEBI" id="CHEBI:60240"/>
        <label>1</label>
    </ligand>
</feature>
<feature type="binding site" evidence="1">
    <location>
        <position position="333"/>
    </location>
    <ligand>
        <name>a divalent metal cation</name>
        <dbReference type="ChEBI" id="CHEBI:60240"/>
        <label>2</label>
    </ligand>
</feature>
<feature type="binding site" evidence="1">
    <location>
        <position position="336"/>
    </location>
    <ligand>
        <name>a divalent metal cation</name>
        <dbReference type="ChEBI" id="CHEBI:60240"/>
        <label>1</label>
    </ligand>
</feature>
<feature type="binding site" evidence="1">
    <location>
        <position position="336"/>
    </location>
    <ligand>
        <name>a divalent metal cation</name>
        <dbReference type="ChEBI" id="CHEBI:60240"/>
        <label>2</label>
    </ligand>
</feature>
<feature type="sequence conflict" description="In Ref. 1; BAA12492." evidence="2" ref="1">
    <original>KD</original>
    <variation>FC</variation>
    <location>
        <begin position="265"/>
        <end position="266"/>
    </location>
</feature>
<comment type="subunit">
    <text evidence="1">Homohexamer.</text>
</comment>
<comment type="similarity">
    <text evidence="2">Belongs to the GTP cyclohydrolase I type 2/NIF3 family.</text>
</comment>
<comment type="sequence caution" evidence="2">
    <conflict type="frameshift">
        <sequence resource="EMBL-CDS" id="BAA12492"/>
    </conflict>
</comment>
<keyword id="KW-0479">Metal-binding</keyword>
<keyword id="KW-1185">Reference proteome</keyword>
<protein>
    <recommendedName>
        <fullName>GTP cyclohydrolase 1 type 2 homolog</fullName>
    </recommendedName>
</protein>
<sequence length="373" mass="40920">MAKSVNGQQIIQLFEQFSPKAYAVEGDKIGLQIGTLNKPIKNVMVTLDVLESVIDEAIEKEVDLIIAHHPPIFRSLKHISTDQPAGRLIEKCLKHDIAVYAAHTNLDVADGGVNDLLAEALELSETEVLAPTYTDPLKKLAVYVPKEYEEQVRAALGNAGAGHIGEYSHCAFSSEGIGSFKPLDGAKPFIGEVGELELVHEVRLETVFPKSVEKAVINAMIKSHPYEEVAYDIYPVEQTPAEKGLGRVGTLKNEMTLKEFALFVKDKLDVNGVRMVGDADSMVKKVAVLGGDGNKYIHHAKRKGADVYVTGDLYFHVAHDAMMLGLNVVDPGHYAEKIMKEGVTRKLTSMCNDKKFGVNIFVSETDTNPFTFL</sequence>
<evidence type="ECO:0000250" key="1">
    <source>
        <dbReference type="UniProtKB" id="P0AFP6"/>
    </source>
</evidence>
<evidence type="ECO:0000305" key="2"/>
<name>GCH1L_BACSU</name>
<proteinExistence type="inferred from homology"/>
<dbReference type="EMBL" id="D84432">
    <property type="protein sequence ID" value="BAA12492.1"/>
    <property type="status" value="ALT_FRAME"/>
    <property type="molecule type" value="Genomic_DNA"/>
</dbReference>
<dbReference type="EMBL" id="AL009126">
    <property type="protein sequence ID" value="CAB14447.1"/>
    <property type="molecule type" value="Genomic_DNA"/>
</dbReference>
<dbReference type="PIR" id="A69954">
    <property type="entry name" value="A69954"/>
</dbReference>
<dbReference type="RefSeq" id="NP_390396.1">
    <property type="nucleotide sequence ID" value="NC_000964.3"/>
</dbReference>
<dbReference type="RefSeq" id="WP_004399125.1">
    <property type="nucleotide sequence ID" value="NZ_OZ025638.1"/>
</dbReference>
<dbReference type="SMR" id="P54472"/>
<dbReference type="FunCoup" id="P54472">
    <property type="interactions" value="299"/>
</dbReference>
<dbReference type="STRING" id="224308.BSU25170"/>
<dbReference type="jPOST" id="P54472"/>
<dbReference type="PaxDb" id="224308-BSU25170"/>
<dbReference type="EnsemblBacteria" id="CAB14447">
    <property type="protein sequence ID" value="CAB14447"/>
    <property type="gene ID" value="BSU_25170"/>
</dbReference>
<dbReference type="GeneID" id="937901"/>
<dbReference type="KEGG" id="bsu:BSU25170"/>
<dbReference type="PATRIC" id="fig|224308.179.peg.2736"/>
<dbReference type="eggNOG" id="COG0327">
    <property type="taxonomic scope" value="Bacteria"/>
</dbReference>
<dbReference type="InParanoid" id="P54472"/>
<dbReference type="OrthoDB" id="9792792at2"/>
<dbReference type="PhylomeDB" id="P54472"/>
<dbReference type="BioCyc" id="BSUB:BSU25170-MONOMER"/>
<dbReference type="Proteomes" id="UP000001570">
    <property type="component" value="Chromosome"/>
</dbReference>
<dbReference type="GO" id="GO:0005737">
    <property type="term" value="C:cytoplasm"/>
    <property type="evidence" value="ECO:0000318"/>
    <property type="project" value="GO_Central"/>
</dbReference>
<dbReference type="GO" id="GO:0046872">
    <property type="term" value="F:metal ion binding"/>
    <property type="evidence" value="ECO:0007669"/>
    <property type="project" value="UniProtKB-KW"/>
</dbReference>
<dbReference type="FunFam" id="3.40.1390.30:FF:000001">
    <property type="entry name" value="GTP cyclohydrolase 1 type 2"/>
    <property type="match status" value="1"/>
</dbReference>
<dbReference type="FunFam" id="3.30.70.120:FF:000006">
    <property type="entry name" value="GTP cyclohydrolase 1 type 2 homolog"/>
    <property type="match status" value="1"/>
</dbReference>
<dbReference type="Gene3D" id="3.30.70.120">
    <property type="match status" value="1"/>
</dbReference>
<dbReference type="Gene3D" id="3.40.1390.30">
    <property type="entry name" value="NIF3 (NGG1p interacting factor 3)-like"/>
    <property type="match status" value="1"/>
</dbReference>
<dbReference type="InterPro" id="IPR002678">
    <property type="entry name" value="DUF34/NIF3"/>
</dbReference>
<dbReference type="InterPro" id="IPR017221">
    <property type="entry name" value="DUF34/NIF3_bac"/>
</dbReference>
<dbReference type="InterPro" id="IPR036069">
    <property type="entry name" value="DUF34/NIF3_sf"/>
</dbReference>
<dbReference type="InterPro" id="IPR015867">
    <property type="entry name" value="N-reg_PII/ATP_PRibTrfase_C"/>
</dbReference>
<dbReference type="NCBIfam" id="TIGR00486">
    <property type="entry name" value="YbgI_SA1388"/>
    <property type="match status" value="1"/>
</dbReference>
<dbReference type="PANTHER" id="PTHR13799:SF14">
    <property type="entry name" value="GTP CYCLOHYDROLASE 1 TYPE 2 HOMOLOG"/>
    <property type="match status" value="1"/>
</dbReference>
<dbReference type="PANTHER" id="PTHR13799">
    <property type="entry name" value="NGG1 INTERACTING FACTOR 3"/>
    <property type="match status" value="1"/>
</dbReference>
<dbReference type="Pfam" id="PF01784">
    <property type="entry name" value="DUF34_NIF3"/>
    <property type="match status" value="1"/>
</dbReference>
<dbReference type="PIRSF" id="PIRSF037489">
    <property type="entry name" value="UCP037489_NIF3_YqfO"/>
    <property type="match status" value="1"/>
</dbReference>
<dbReference type="SUPFAM" id="SSF102705">
    <property type="entry name" value="NIF3 (NGG1p interacting factor 3)-like"/>
    <property type="match status" value="1"/>
</dbReference>
<reference key="1">
    <citation type="journal article" date="1996" name="Microbiology">
        <title>Systematic sequencing of the 283 kb 210 degrees-232 degrees region of the Bacillus subtilis genome containing the skin element and many sporulation genes.</title>
        <authorList>
            <person name="Mizuno M."/>
            <person name="Masuda S."/>
            <person name="Takemaru K."/>
            <person name="Hosono S."/>
            <person name="Sato T."/>
            <person name="Takeuchi M."/>
            <person name="Kobayashi Y."/>
        </authorList>
    </citation>
    <scope>NUCLEOTIDE SEQUENCE [GENOMIC DNA]</scope>
    <source>
        <strain>168 / JH642</strain>
    </source>
</reference>
<reference key="2">
    <citation type="journal article" date="1997" name="Nature">
        <title>The complete genome sequence of the Gram-positive bacterium Bacillus subtilis.</title>
        <authorList>
            <person name="Kunst F."/>
            <person name="Ogasawara N."/>
            <person name="Moszer I."/>
            <person name="Albertini A.M."/>
            <person name="Alloni G."/>
            <person name="Azevedo V."/>
            <person name="Bertero M.G."/>
            <person name="Bessieres P."/>
            <person name="Bolotin A."/>
            <person name="Borchert S."/>
            <person name="Borriss R."/>
            <person name="Boursier L."/>
            <person name="Brans A."/>
            <person name="Braun M."/>
            <person name="Brignell S.C."/>
            <person name="Bron S."/>
            <person name="Brouillet S."/>
            <person name="Bruschi C.V."/>
            <person name="Caldwell B."/>
            <person name="Capuano V."/>
            <person name="Carter N.M."/>
            <person name="Choi S.-K."/>
            <person name="Codani J.-J."/>
            <person name="Connerton I.F."/>
            <person name="Cummings N.J."/>
            <person name="Daniel R.A."/>
            <person name="Denizot F."/>
            <person name="Devine K.M."/>
            <person name="Duesterhoeft A."/>
            <person name="Ehrlich S.D."/>
            <person name="Emmerson P.T."/>
            <person name="Entian K.-D."/>
            <person name="Errington J."/>
            <person name="Fabret C."/>
            <person name="Ferrari E."/>
            <person name="Foulger D."/>
            <person name="Fritz C."/>
            <person name="Fujita M."/>
            <person name="Fujita Y."/>
            <person name="Fuma S."/>
            <person name="Galizzi A."/>
            <person name="Galleron N."/>
            <person name="Ghim S.-Y."/>
            <person name="Glaser P."/>
            <person name="Goffeau A."/>
            <person name="Golightly E.J."/>
            <person name="Grandi G."/>
            <person name="Guiseppi G."/>
            <person name="Guy B.J."/>
            <person name="Haga K."/>
            <person name="Haiech J."/>
            <person name="Harwood C.R."/>
            <person name="Henaut A."/>
            <person name="Hilbert H."/>
            <person name="Holsappel S."/>
            <person name="Hosono S."/>
            <person name="Hullo M.-F."/>
            <person name="Itaya M."/>
            <person name="Jones L.-M."/>
            <person name="Joris B."/>
            <person name="Karamata D."/>
            <person name="Kasahara Y."/>
            <person name="Klaerr-Blanchard M."/>
            <person name="Klein C."/>
            <person name="Kobayashi Y."/>
            <person name="Koetter P."/>
            <person name="Koningstein G."/>
            <person name="Krogh S."/>
            <person name="Kumano M."/>
            <person name="Kurita K."/>
            <person name="Lapidus A."/>
            <person name="Lardinois S."/>
            <person name="Lauber J."/>
            <person name="Lazarevic V."/>
            <person name="Lee S.-M."/>
            <person name="Levine A."/>
            <person name="Liu H."/>
            <person name="Masuda S."/>
            <person name="Mauel C."/>
            <person name="Medigue C."/>
            <person name="Medina N."/>
            <person name="Mellado R.P."/>
            <person name="Mizuno M."/>
            <person name="Moestl D."/>
            <person name="Nakai S."/>
            <person name="Noback M."/>
            <person name="Noone D."/>
            <person name="O'Reilly M."/>
            <person name="Ogawa K."/>
            <person name="Ogiwara A."/>
            <person name="Oudega B."/>
            <person name="Park S.-H."/>
            <person name="Parro V."/>
            <person name="Pohl T.M."/>
            <person name="Portetelle D."/>
            <person name="Porwollik S."/>
            <person name="Prescott A.M."/>
            <person name="Presecan E."/>
            <person name="Pujic P."/>
            <person name="Purnelle B."/>
            <person name="Rapoport G."/>
            <person name="Rey M."/>
            <person name="Reynolds S."/>
            <person name="Rieger M."/>
            <person name="Rivolta C."/>
            <person name="Rocha E."/>
            <person name="Roche B."/>
            <person name="Rose M."/>
            <person name="Sadaie Y."/>
            <person name="Sato T."/>
            <person name="Scanlan E."/>
            <person name="Schleich S."/>
            <person name="Schroeter R."/>
            <person name="Scoffone F."/>
            <person name="Sekiguchi J."/>
            <person name="Sekowska A."/>
            <person name="Seror S.J."/>
            <person name="Serror P."/>
            <person name="Shin B.-S."/>
            <person name="Soldo B."/>
            <person name="Sorokin A."/>
            <person name="Tacconi E."/>
            <person name="Takagi T."/>
            <person name="Takahashi H."/>
            <person name="Takemaru K."/>
            <person name="Takeuchi M."/>
            <person name="Tamakoshi A."/>
            <person name="Tanaka T."/>
            <person name="Terpstra P."/>
            <person name="Tognoni A."/>
            <person name="Tosato V."/>
            <person name="Uchiyama S."/>
            <person name="Vandenbol M."/>
            <person name="Vannier F."/>
            <person name="Vassarotti A."/>
            <person name="Viari A."/>
            <person name="Wambutt R."/>
            <person name="Wedler E."/>
            <person name="Wedler H."/>
            <person name="Weitzenegger T."/>
            <person name="Winters P."/>
            <person name="Wipat A."/>
            <person name="Yamamoto H."/>
            <person name="Yamane K."/>
            <person name="Yasumoto K."/>
            <person name="Yata K."/>
            <person name="Yoshida K."/>
            <person name="Yoshikawa H.-F."/>
            <person name="Zumstein E."/>
            <person name="Yoshikawa H."/>
            <person name="Danchin A."/>
        </authorList>
    </citation>
    <scope>NUCLEOTIDE SEQUENCE [LARGE SCALE GENOMIC DNA]</scope>
    <source>
        <strain>168</strain>
    </source>
</reference>
<gene>
    <name type="primary">yqfO</name>
    <name type="ordered locus">BSU25170</name>
</gene>
<accession>P54472</accession>
<accession>O32024</accession>